<feature type="chain" id="PRO_1000070654" description="Urease subunit alpha">
    <location>
        <begin position="1"/>
        <end position="567"/>
    </location>
</feature>
<feature type="domain" description="Urease" evidence="1">
    <location>
        <begin position="129"/>
        <end position="567"/>
    </location>
</feature>
<feature type="active site" description="Proton donor" evidence="1">
    <location>
        <position position="320"/>
    </location>
</feature>
<feature type="binding site" evidence="1">
    <location>
        <position position="134"/>
    </location>
    <ligand>
        <name>Ni(2+)</name>
        <dbReference type="ChEBI" id="CHEBI:49786"/>
        <label>1</label>
    </ligand>
</feature>
<feature type="binding site" evidence="1">
    <location>
        <position position="136"/>
    </location>
    <ligand>
        <name>Ni(2+)</name>
        <dbReference type="ChEBI" id="CHEBI:49786"/>
        <label>1</label>
    </ligand>
</feature>
<feature type="binding site" description="via carbamate group" evidence="1">
    <location>
        <position position="217"/>
    </location>
    <ligand>
        <name>Ni(2+)</name>
        <dbReference type="ChEBI" id="CHEBI:49786"/>
        <label>1</label>
    </ligand>
</feature>
<feature type="binding site" description="via carbamate group" evidence="1">
    <location>
        <position position="217"/>
    </location>
    <ligand>
        <name>Ni(2+)</name>
        <dbReference type="ChEBI" id="CHEBI:49786"/>
        <label>2</label>
    </ligand>
</feature>
<feature type="binding site" evidence="1">
    <location>
        <position position="219"/>
    </location>
    <ligand>
        <name>substrate</name>
    </ligand>
</feature>
<feature type="binding site" evidence="1">
    <location>
        <position position="246"/>
    </location>
    <ligand>
        <name>Ni(2+)</name>
        <dbReference type="ChEBI" id="CHEBI:49786"/>
        <label>2</label>
    </ligand>
</feature>
<feature type="binding site" evidence="1">
    <location>
        <position position="272"/>
    </location>
    <ligand>
        <name>Ni(2+)</name>
        <dbReference type="ChEBI" id="CHEBI:49786"/>
        <label>2</label>
    </ligand>
</feature>
<feature type="binding site" evidence="1">
    <location>
        <position position="360"/>
    </location>
    <ligand>
        <name>Ni(2+)</name>
        <dbReference type="ChEBI" id="CHEBI:49786"/>
        <label>1</label>
    </ligand>
</feature>
<feature type="modified residue" description="N6-carboxylysine" evidence="1">
    <location>
        <position position="217"/>
    </location>
</feature>
<keyword id="KW-0963">Cytoplasm</keyword>
<keyword id="KW-0378">Hydrolase</keyword>
<keyword id="KW-0479">Metal-binding</keyword>
<keyword id="KW-0533">Nickel</keyword>
<keyword id="KW-1185">Reference proteome</keyword>
<comment type="catalytic activity">
    <reaction evidence="1">
        <text>urea + 2 H2O + H(+) = hydrogencarbonate + 2 NH4(+)</text>
        <dbReference type="Rhea" id="RHEA:20557"/>
        <dbReference type="ChEBI" id="CHEBI:15377"/>
        <dbReference type="ChEBI" id="CHEBI:15378"/>
        <dbReference type="ChEBI" id="CHEBI:16199"/>
        <dbReference type="ChEBI" id="CHEBI:17544"/>
        <dbReference type="ChEBI" id="CHEBI:28938"/>
        <dbReference type="EC" id="3.5.1.5"/>
    </reaction>
</comment>
<comment type="cofactor">
    <cofactor evidence="1">
        <name>Ni cation</name>
        <dbReference type="ChEBI" id="CHEBI:25516"/>
    </cofactor>
    <text evidence="1">Binds 2 nickel ions per subunit.</text>
</comment>
<comment type="pathway">
    <text evidence="1">Nitrogen metabolism; urea degradation; CO(2) and NH(3) from urea (urease route): step 1/1.</text>
</comment>
<comment type="subunit">
    <text evidence="1">Heterotrimer of UreA (gamma), UreB (beta) and UreC (alpha) subunits. Three heterotrimers associate to form the active enzyme.</text>
</comment>
<comment type="subcellular location">
    <subcellularLocation>
        <location evidence="1">Cytoplasm</location>
    </subcellularLocation>
</comment>
<comment type="PTM">
    <text evidence="1">Carboxylation allows a single lysine to coordinate two nickel ions.</text>
</comment>
<comment type="similarity">
    <text evidence="1">Belongs to the metallo-dependent hydrolases superfamily. Urease alpha subunit family.</text>
</comment>
<sequence length="567" mass="60475">MTEISRQAYADMFGPTTGDRVRLADTELWIEVENDLTAYGEEVKFGGGKVIRDGMGQGQMRARACVDLVITNALIVDHWGIVKADIGIKDGRIFAIGKAGNPDIQPNVTIPIGVGTEAIAGEGKIVTAGGVDTHIHWICPQQAEEALVSGVTTMIGGGTGPAAGTNATTCTPGPWYIARMLQAADSLPVNIGFLGKGNGSNPDALREQIAAGAIGLKIHEDWGATPAAIDCALTVAEEMDIQVALHSDTLNESGFVEDTLAAIGDRTIHTFHTEGAGGGHAPDIITACAHPHILPSSTNPTLPYTVNTIDEHLDMLMVCHHLDPDIAEDVAFAESRIRRETIAAEDVLHDLGAFSLTSSDSQAMGRVGEVILRTWQVAHRMKVQRGPLAEETGDNDNQRVKRYIAKYTINPALTHGIAHEVGSVEAGKLADLVLWSPAFFGVKPATLIKGGMIVCAPMGDINASIPTPQPVHYRPMFGALGAARHHCRLTFLSQAAVENGIAQQLNLRSATAVVKGCRTVKKADMIHNSLQPNITVDAQTYEVRIDGEPITSEPADVLPMAQRYFLF</sequence>
<reference key="1">
    <citation type="submission" date="2007-08" db="EMBL/GenBank/DDBJ databases">
        <authorList>
            <consortium name="The Citrobacter koseri Genome Sequencing Project"/>
            <person name="McClelland M."/>
            <person name="Sanderson E.K."/>
            <person name="Porwollik S."/>
            <person name="Spieth J."/>
            <person name="Clifton W.S."/>
            <person name="Latreille P."/>
            <person name="Courtney L."/>
            <person name="Wang C."/>
            <person name="Pepin K."/>
            <person name="Bhonagiri V."/>
            <person name="Nash W."/>
            <person name="Johnson M."/>
            <person name="Thiruvilangam P."/>
            <person name="Wilson R."/>
        </authorList>
    </citation>
    <scope>NUCLEOTIDE SEQUENCE [LARGE SCALE GENOMIC DNA]</scope>
    <source>
        <strain>ATCC BAA-895 / CDC 4225-83 / SGSC4696</strain>
    </source>
</reference>
<name>URE1_CITK8</name>
<evidence type="ECO:0000255" key="1">
    <source>
        <dbReference type="HAMAP-Rule" id="MF_01953"/>
    </source>
</evidence>
<protein>
    <recommendedName>
        <fullName evidence="1">Urease subunit alpha</fullName>
        <ecNumber evidence="1">3.5.1.5</ecNumber>
    </recommendedName>
    <alternativeName>
        <fullName evidence="1">Urea amidohydrolase subunit alpha</fullName>
    </alternativeName>
</protein>
<proteinExistence type="inferred from homology"/>
<organism>
    <name type="scientific">Citrobacter koseri (strain ATCC BAA-895 / CDC 4225-83 / SGSC4696)</name>
    <dbReference type="NCBI Taxonomy" id="290338"/>
    <lineage>
        <taxon>Bacteria</taxon>
        <taxon>Pseudomonadati</taxon>
        <taxon>Pseudomonadota</taxon>
        <taxon>Gammaproteobacteria</taxon>
        <taxon>Enterobacterales</taxon>
        <taxon>Enterobacteriaceae</taxon>
        <taxon>Citrobacter</taxon>
    </lineage>
</organism>
<accession>A8APV0</accession>
<dbReference type="EC" id="3.5.1.5" evidence="1"/>
<dbReference type="EMBL" id="CP000822">
    <property type="protein sequence ID" value="ABV15513.1"/>
    <property type="molecule type" value="Genomic_DNA"/>
</dbReference>
<dbReference type="RefSeq" id="WP_012135196.1">
    <property type="nucleotide sequence ID" value="NC_009792.1"/>
</dbReference>
<dbReference type="SMR" id="A8APV0"/>
<dbReference type="STRING" id="290338.CKO_04457"/>
<dbReference type="MEROPS" id="M38.982"/>
<dbReference type="GeneID" id="45138026"/>
<dbReference type="KEGG" id="cko:CKO_04457"/>
<dbReference type="HOGENOM" id="CLU_000980_0_0_6"/>
<dbReference type="OrthoDB" id="9802793at2"/>
<dbReference type="UniPathway" id="UPA00258">
    <property type="reaction ID" value="UER00370"/>
</dbReference>
<dbReference type="Proteomes" id="UP000008148">
    <property type="component" value="Chromosome"/>
</dbReference>
<dbReference type="GO" id="GO:0005737">
    <property type="term" value="C:cytoplasm"/>
    <property type="evidence" value="ECO:0007669"/>
    <property type="project" value="UniProtKB-SubCell"/>
</dbReference>
<dbReference type="GO" id="GO:0016151">
    <property type="term" value="F:nickel cation binding"/>
    <property type="evidence" value="ECO:0007669"/>
    <property type="project" value="UniProtKB-UniRule"/>
</dbReference>
<dbReference type="GO" id="GO:0009039">
    <property type="term" value="F:urease activity"/>
    <property type="evidence" value="ECO:0007669"/>
    <property type="project" value="UniProtKB-UniRule"/>
</dbReference>
<dbReference type="GO" id="GO:0043419">
    <property type="term" value="P:urea catabolic process"/>
    <property type="evidence" value="ECO:0007669"/>
    <property type="project" value="UniProtKB-UniRule"/>
</dbReference>
<dbReference type="CDD" id="cd00375">
    <property type="entry name" value="Urease_alpha"/>
    <property type="match status" value="1"/>
</dbReference>
<dbReference type="Gene3D" id="3.20.20.140">
    <property type="entry name" value="Metal-dependent hydrolases"/>
    <property type="match status" value="1"/>
</dbReference>
<dbReference type="Gene3D" id="2.30.40.10">
    <property type="entry name" value="Urease, subunit C, domain 1"/>
    <property type="match status" value="1"/>
</dbReference>
<dbReference type="HAMAP" id="MF_01953">
    <property type="entry name" value="Urease_alpha"/>
    <property type="match status" value="1"/>
</dbReference>
<dbReference type="InterPro" id="IPR006680">
    <property type="entry name" value="Amidohydro-rel"/>
</dbReference>
<dbReference type="InterPro" id="IPR011059">
    <property type="entry name" value="Metal-dep_hydrolase_composite"/>
</dbReference>
<dbReference type="InterPro" id="IPR032466">
    <property type="entry name" value="Metal_Hydrolase"/>
</dbReference>
<dbReference type="InterPro" id="IPR011612">
    <property type="entry name" value="Urease_alpha_N_dom"/>
</dbReference>
<dbReference type="InterPro" id="IPR050112">
    <property type="entry name" value="Urease_alpha_subunit"/>
</dbReference>
<dbReference type="InterPro" id="IPR017950">
    <property type="entry name" value="Urease_AS"/>
</dbReference>
<dbReference type="InterPro" id="IPR005848">
    <property type="entry name" value="Urease_asu"/>
</dbReference>
<dbReference type="InterPro" id="IPR017951">
    <property type="entry name" value="Urease_asu_c"/>
</dbReference>
<dbReference type="InterPro" id="IPR029754">
    <property type="entry name" value="Urease_Ni-bd"/>
</dbReference>
<dbReference type="NCBIfam" id="NF009685">
    <property type="entry name" value="PRK13206.1"/>
    <property type="match status" value="1"/>
</dbReference>
<dbReference type="NCBIfam" id="NF009686">
    <property type="entry name" value="PRK13207.1"/>
    <property type="match status" value="1"/>
</dbReference>
<dbReference type="NCBIfam" id="TIGR01792">
    <property type="entry name" value="urease_alph"/>
    <property type="match status" value="1"/>
</dbReference>
<dbReference type="PANTHER" id="PTHR43440">
    <property type="entry name" value="UREASE"/>
    <property type="match status" value="1"/>
</dbReference>
<dbReference type="PANTHER" id="PTHR43440:SF1">
    <property type="entry name" value="UREASE"/>
    <property type="match status" value="1"/>
</dbReference>
<dbReference type="Pfam" id="PF01979">
    <property type="entry name" value="Amidohydro_1"/>
    <property type="match status" value="1"/>
</dbReference>
<dbReference type="Pfam" id="PF00449">
    <property type="entry name" value="Urease_alpha"/>
    <property type="match status" value="1"/>
</dbReference>
<dbReference type="PRINTS" id="PR01752">
    <property type="entry name" value="UREASE"/>
</dbReference>
<dbReference type="SUPFAM" id="SSF51338">
    <property type="entry name" value="Composite domain of metallo-dependent hydrolases"/>
    <property type="match status" value="2"/>
</dbReference>
<dbReference type="SUPFAM" id="SSF51556">
    <property type="entry name" value="Metallo-dependent hydrolases"/>
    <property type="match status" value="1"/>
</dbReference>
<dbReference type="PROSITE" id="PS01120">
    <property type="entry name" value="UREASE_1"/>
    <property type="match status" value="1"/>
</dbReference>
<dbReference type="PROSITE" id="PS00145">
    <property type="entry name" value="UREASE_2"/>
    <property type="match status" value="1"/>
</dbReference>
<dbReference type="PROSITE" id="PS51368">
    <property type="entry name" value="UREASE_3"/>
    <property type="match status" value="1"/>
</dbReference>
<gene>
    <name evidence="1" type="primary">ureC</name>
    <name type="ordered locus">CKO_04457</name>
</gene>